<dbReference type="EMBL" id="CU329671">
    <property type="protein sequence ID" value="CAC19755.1"/>
    <property type="molecule type" value="Genomic_DNA"/>
</dbReference>
<dbReference type="RefSeq" id="NP_596173.1">
    <property type="nucleotide sequence ID" value="NM_001022093.2"/>
</dbReference>
<dbReference type="SMR" id="Q9HDV5"/>
<dbReference type="ComplexPortal" id="CPX-10323">
    <property type="entry name" value="54S mitochondrial large ribosomal subunit"/>
</dbReference>
<dbReference type="FunCoup" id="Q9HDV5">
    <property type="interactions" value="206"/>
</dbReference>
<dbReference type="STRING" id="284812.Q9HDV5"/>
<dbReference type="PaxDb" id="4896-SPAP19A11.05c.1"/>
<dbReference type="EnsemblFungi" id="SPAP19A11.05c.1">
    <property type="protein sequence ID" value="SPAP19A11.05c.1:pep"/>
    <property type="gene ID" value="SPAP19A11.05c"/>
</dbReference>
<dbReference type="GeneID" id="2540102"/>
<dbReference type="KEGG" id="spo:2540102"/>
<dbReference type="PomBase" id="SPAP19A11.05c">
    <property type="gene designation" value="mrp7"/>
</dbReference>
<dbReference type="VEuPathDB" id="FungiDB:SPAP19A11.05c"/>
<dbReference type="eggNOG" id="KOG4600">
    <property type="taxonomic scope" value="Eukaryota"/>
</dbReference>
<dbReference type="HOGENOM" id="CLU_095424_3_2_1"/>
<dbReference type="InParanoid" id="Q9HDV5"/>
<dbReference type="OMA" id="FYKDAQH"/>
<dbReference type="PhylomeDB" id="Q9HDV5"/>
<dbReference type="PRO" id="PR:Q9HDV5"/>
<dbReference type="Proteomes" id="UP000002485">
    <property type="component" value="Chromosome II"/>
</dbReference>
<dbReference type="GO" id="GO:0005762">
    <property type="term" value="C:mitochondrial large ribosomal subunit"/>
    <property type="evidence" value="ECO:0000318"/>
    <property type="project" value="GO_Central"/>
</dbReference>
<dbReference type="GO" id="GO:0003735">
    <property type="term" value="F:structural constituent of ribosome"/>
    <property type="evidence" value="ECO:0000318"/>
    <property type="project" value="GO_Central"/>
</dbReference>
<dbReference type="GO" id="GO:0032543">
    <property type="term" value="P:mitochondrial translation"/>
    <property type="evidence" value="ECO:0000250"/>
    <property type="project" value="PomBase"/>
</dbReference>
<dbReference type="FunFam" id="2.40.50.100:FF:000042">
    <property type="entry name" value="50S ribosomal protein L27"/>
    <property type="match status" value="1"/>
</dbReference>
<dbReference type="Gene3D" id="2.40.50.100">
    <property type="match status" value="1"/>
</dbReference>
<dbReference type="InterPro" id="IPR001684">
    <property type="entry name" value="Ribosomal_bL27"/>
</dbReference>
<dbReference type="InterPro" id="IPR018261">
    <property type="entry name" value="Ribosomal_bL27_CS"/>
</dbReference>
<dbReference type="NCBIfam" id="TIGR00062">
    <property type="entry name" value="L27"/>
    <property type="match status" value="1"/>
</dbReference>
<dbReference type="PANTHER" id="PTHR15893:SF0">
    <property type="entry name" value="LARGE RIBOSOMAL SUBUNIT PROTEIN BL27M"/>
    <property type="match status" value="1"/>
</dbReference>
<dbReference type="PANTHER" id="PTHR15893">
    <property type="entry name" value="RIBOSOMAL PROTEIN L27"/>
    <property type="match status" value="1"/>
</dbReference>
<dbReference type="Pfam" id="PF01016">
    <property type="entry name" value="Ribosomal_L27"/>
    <property type="match status" value="1"/>
</dbReference>
<dbReference type="PRINTS" id="PR00063">
    <property type="entry name" value="RIBOSOMALL27"/>
</dbReference>
<dbReference type="SUPFAM" id="SSF110324">
    <property type="entry name" value="Ribosomal L27 protein-like"/>
    <property type="match status" value="1"/>
</dbReference>
<dbReference type="PROSITE" id="PS00831">
    <property type="entry name" value="RIBOSOMAL_L27"/>
    <property type="match status" value="1"/>
</dbReference>
<reference key="1">
    <citation type="journal article" date="2002" name="Nature">
        <title>The genome sequence of Schizosaccharomyces pombe.</title>
        <authorList>
            <person name="Wood V."/>
            <person name="Gwilliam R."/>
            <person name="Rajandream M.A."/>
            <person name="Lyne M.H."/>
            <person name="Lyne R."/>
            <person name="Stewart A."/>
            <person name="Sgouros J.G."/>
            <person name="Peat N."/>
            <person name="Hayles J."/>
            <person name="Baker S.G."/>
            <person name="Basham D."/>
            <person name="Bowman S."/>
            <person name="Brooks K."/>
            <person name="Brown D."/>
            <person name="Brown S."/>
            <person name="Chillingworth T."/>
            <person name="Churcher C.M."/>
            <person name="Collins M."/>
            <person name="Connor R."/>
            <person name="Cronin A."/>
            <person name="Davis P."/>
            <person name="Feltwell T."/>
            <person name="Fraser A."/>
            <person name="Gentles S."/>
            <person name="Goble A."/>
            <person name="Hamlin N."/>
            <person name="Harris D.E."/>
            <person name="Hidalgo J."/>
            <person name="Hodgson G."/>
            <person name="Holroyd S."/>
            <person name="Hornsby T."/>
            <person name="Howarth S."/>
            <person name="Huckle E.J."/>
            <person name="Hunt S."/>
            <person name="Jagels K."/>
            <person name="James K.D."/>
            <person name="Jones L."/>
            <person name="Jones M."/>
            <person name="Leather S."/>
            <person name="McDonald S."/>
            <person name="McLean J."/>
            <person name="Mooney P."/>
            <person name="Moule S."/>
            <person name="Mungall K.L."/>
            <person name="Murphy L.D."/>
            <person name="Niblett D."/>
            <person name="Odell C."/>
            <person name="Oliver K."/>
            <person name="O'Neil S."/>
            <person name="Pearson D."/>
            <person name="Quail M.A."/>
            <person name="Rabbinowitsch E."/>
            <person name="Rutherford K.M."/>
            <person name="Rutter S."/>
            <person name="Saunders D."/>
            <person name="Seeger K."/>
            <person name="Sharp S."/>
            <person name="Skelton J."/>
            <person name="Simmonds M.N."/>
            <person name="Squares R."/>
            <person name="Squares S."/>
            <person name="Stevens K."/>
            <person name="Taylor K."/>
            <person name="Taylor R.G."/>
            <person name="Tivey A."/>
            <person name="Walsh S.V."/>
            <person name="Warren T."/>
            <person name="Whitehead S."/>
            <person name="Woodward J.R."/>
            <person name="Volckaert G."/>
            <person name="Aert R."/>
            <person name="Robben J."/>
            <person name="Grymonprez B."/>
            <person name="Weltjens I."/>
            <person name="Vanstreels E."/>
            <person name="Rieger M."/>
            <person name="Schaefer M."/>
            <person name="Mueller-Auer S."/>
            <person name="Gabel C."/>
            <person name="Fuchs M."/>
            <person name="Duesterhoeft A."/>
            <person name="Fritzc C."/>
            <person name="Holzer E."/>
            <person name="Moestl D."/>
            <person name="Hilbert H."/>
            <person name="Borzym K."/>
            <person name="Langer I."/>
            <person name="Beck A."/>
            <person name="Lehrach H."/>
            <person name="Reinhardt R."/>
            <person name="Pohl T.M."/>
            <person name="Eger P."/>
            <person name="Zimmermann W."/>
            <person name="Wedler H."/>
            <person name="Wambutt R."/>
            <person name="Purnelle B."/>
            <person name="Goffeau A."/>
            <person name="Cadieu E."/>
            <person name="Dreano S."/>
            <person name="Gloux S."/>
            <person name="Lelaure V."/>
            <person name="Mottier S."/>
            <person name="Galibert F."/>
            <person name="Aves S.J."/>
            <person name="Xiang Z."/>
            <person name="Hunt C."/>
            <person name="Moore K."/>
            <person name="Hurst S.M."/>
            <person name="Lucas M."/>
            <person name="Rochet M."/>
            <person name="Gaillardin C."/>
            <person name="Tallada V.A."/>
            <person name="Garzon A."/>
            <person name="Thode G."/>
            <person name="Daga R.R."/>
            <person name="Cruzado L."/>
            <person name="Jimenez J."/>
            <person name="Sanchez M."/>
            <person name="del Rey F."/>
            <person name="Benito J."/>
            <person name="Dominguez A."/>
            <person name="Revuelta J.L."/>
            <person name="Moreno S."/>
            <person name="Armstrong J."/>
            <person name="Forsburg S.L."/>
            <person name="Cerutti L."/>
            <person name="Lowe T."/>
            <person name="McCombie W.R."/>
            <person name="Paulsen I."/>
            <person name="Potashkin J."/>
            <person name="Shpakovski G.V."/>
            <person name="Ussery D."/>
            <person name="Barrell B.G."/>
            <person name="Nurse P."/>
        </authorList>
    </citation>
    <scope>NUCLEOTIDE SEQUENCE [LARGE SCALE GENOMIC DNA]</scope>
    <source>
        <strain>972 / ATCC 24843</strain>
    </source>
</reference>
<gene>
    <name type="primary">mrp7</name>
    <name type="ORF">SPAP19A11.05c</name>
</gene>
<organism>
    <name type="scientific">Schizosaccharomyces pombe (strain 972 / ATCC 24843)</name>
    <name type="common">Fission yeast</name>
    <dbReference type="NCBI Taxonomy" id="284812"/>
    <lineage>
        <taxon>Eukaryota</taxon>
        <taxon>Fungi</taxon>
        <taxon>Dikarya</taxon>
        <taxon>Ascomycota</taxon>
        <taxon>Taphrinomycotina</taxon>
        <taxon>Schizosaccharomycetes</taxon>
        <taxon>Schizosaccharomycetales</taxon>
        <taxon>Schizosaccharomycetaceae</taxon>
        <taxon>Schizosaccharomyces</taxon>
    </lineage>
</organism>
<sequence>MINQGLFIRVNNFQLLKASLAYKKASNILTFPPIRTSTKHGGGSSKNTGDSAGRRLGIKRSENQFVRAGEILIRQRGTKFHPGDNTGLGKDHTIYSLVSGYVKFFQMDVSLRKRRKYVGVVFDKETTLPRPKDEPTIRRVNKYITSANSAQVS</sequence>
<keyword id="KW-0496">Mitochondrion</keyword>
<keyword id="KW-1185">Reference proteome</keyword>
<keyword id="KW-0687">Ribonucleoprotein</keyword>
<keyword id="KW-0689">Ribosomal protein</keyword>
<keyword id="KW-0809">Transit peptide</keyword>
<protein>
    <recommendedName>
        <fullName evidence="4">Large ribosomal subunit protein bL27m</fullName>
    </recommendedName>
    <alternativeName>
        <fullName>54S ribosomal protein L27, mitochondrial</fullName>
    </alternativeName>
</protein>
<comment type="function">
    <text evidence="1">Component of the mitochondrial ribosome (mitoribosome), a dedicated translation machinery responsible for the synthesis of mitochondrial genome-encoded proteins, including at least some of the essential transmembrane subunits of the mitochondrial respiratory chain. The mitoribosomes are attached to the mitochondrial inner membrane and translation products are cotranslationally integrated into the membrane.</text>
</comment>
<comment type="subunit">
    <text evidence="1">Component of the mitochondrial large ribosomal subunit (mt-LSU). Mature yeast 74S mitochondrial ribosomes consist of a small (37S) and a large (54S) subunit. The 37S small subunit contains a 15S ribosomal RNA (15S mt-rRNA) and at least 32 different proteins. The 54S large subunit contains a 21S rRNA (21S mt-rRNA) and at least 45 different proteins.</text>
</comment>
<comment type="subcellular location">
    <subcellularLocation>
        <location evidence="1">Mitochondrion</location>
    </subcellularLocation>
</comment>
<comment type="similarity">
    <text evidence="4">Belongs to the bacterial ribosomal protein bL27 family.</text>
</comment>
<accession>Q9HDV5</accession>
<feature type="transit peptide" description="Mitochondrion" evidence="2">
    <location>
        <begin position="1"/>
        <end position="37"/>
    </location>
</feature>
<feature type="chain" id="PRO_0000030501" description="Large ribosomal subunit protein bL27m">
    <location>
        <begin position="38"/>
        <end position="153"/>
    </location>
</feature>
<feature type="region of interest" description="Disordered" evidence="3">
    <location>
        <begin position="34"/>
        <end position="57"/>
    </location>
</feature>
<evidence type="ECO:0000250" key="1">
    <source>
        <dbReference type="UniProtKB" id="P12687"/>
    </source>
</evidence>
<evidence type="ECO:0000255" key="2"/>
<evidence type="ECO:0000256" key="3">
    <source>
        <dbReference type="SAM" id="MobiDB-lite"/>
    </source>
</evidence>
<evidence type="ECO:0000305" key="4"/>
<name>RM02_SCHPO</name>
<proteinExistence type="inferred from homology"/>